<evidence type="ECO:0000255" key="1">
    <source>
        <dbReference type="HAMAP-Rule" id="MF_00539"/>
    </source>
</evidence>
<evidence type="ECO:0000256" key="2">
    <source>
        <dbReference type="SAM" id="MobiDB-lite"/>
    </source>
</evidence>
<evidence type="ECO:0000305" key="3"/>
<name>RL27_SHEDO</name>
<feature type="chain" id="PRO_1000017599" description="Large ribosomal subunit protein bL27">
    <location>
        <begin position="1"/>
        <end position="84"/>
    </location>
</feature>
<feature type="region of interest" description="Disordered" evidence="2">
    <location>
        <begin position="1"/>
        <end position="22"/>
    </location>
</feature>
<proteinExistence type="inferred from homology"/>
<gene>
    <name evidence="1" type="primary">rpmA</name>
    <name type="ordered locus">Sden_2926</name>
</gene>
<sequence length="84" mass="9063">MAHKKAGGSTRNGRDSESKRLGVKRFGGESVLAGNIIVRQRGTKFHAGVNVGIGRDHTLFALSDGKVKFEVKGPNNRKFISIEA</sequence>
<protein>
    <recommendedName>
        <fullName evidence="1">Large ribosomal subunit protein bL27</fullName>
    </recommendedName>
    <alternativeName>
        <fullName evidence="3">50S ribosomal protein L27</fullName>
    </alternativeName>
</protein>
<organism>
    <name type="scientific">Shewanella denitrificans (strain OS217 / ATCC BAA-1090 / DSM 15013)</name>
    <dbReference type="NCBI Taxonomy" id="318161"/>
    <lineage>
        <taxon>Bacteria</taxon>
        <taxon>Pseudomonadati</taxon>
        <taxon>Pseudomonadota</taxon>
        <taxon>Gammaproteobacteria</taxon>
        <taxon>Alteromonadales</taxon>
        <taxon>Shewanellaceae</taxon>
        <taxon>Shewanella</taxon>
    </lineage>
</organism>
<comment type="similarity">
    <text evidence="1">Belongs to the bacterial ribosomal protein bL27 family.</text>
</comment>
<dbReference type="EMBL" id="CP000302">
    <property type="protein sequence ID" value="ABE56204.1"/>
    <property type="molecule type" value="Genomic_DNA"/>
</dbReference>
<dbReference type="RefSeq" id="WP_011497353.1">
    <property type="nucleotide sequence ID" value="NC_007954.1"/>
</dbReference>
<dbReference type="SMR" id="Q12K22"/>
<dbReference type="STRING" id="318161.Sden_2926"/>
<dbReference type="KEGG" id="sdn:Sden_2926"/>
<dbReference type="eggNOG" id="COG0211">
    <property type="taxonomic scope" value="Bacteria"/>
</dbReference>
<dbReference type="HOGENOM" id="CLU_095424_4_1_6"/>
<dbReference type="OrthoDB" id="9803474at2"/>
<dbReference type="Proteomes" id="UP000001982">
    <property type="component" value="Chromosome"/>
</dbReference>
<dbReference type="GO" id="GO:0022625">
    <property type="term" value="C:cytosolic large ribosomal subunit"/>
    <property type="evidence" value="ECO:0007669"/>
    <property type="project" value="TreeGrafter"/>
</dbReference>
<dbReference type="GO" id="GO:0003735">
    <property type="term" value="F:structural constituent of ribosome"/>
    <property type="evidence" value="ECO:0007669"/>
    <property type="project" value="InterPro"/>
</dbReference>
<dbReference type="GO" id="GO:0006412">
    <property type="term" value="P:translation"/>
    <property type="evidence" value="ECO:0007669"/>
    <property type="project" value="UniProtKB-UniRule"/>
</dbReference>
<dbReference type="FunFam" id="2.40.50.100:FF:000001">
    <property type="entry name" value="50S ribosomal protein L27"/>
    <property type="match status" value="1"/>
</dbReference>
<dbReference type="Gene3D" id="2.40.50.100">
    <property type="match status" value="1"/>
</dbReference>
<dbReference type="HAMAP" id="MF_00539">
    <property type="entry name" value="Ribosomal_bL27"/>
    <property type="match status" value="1"/>
</dbReference>
<dbReference type="InterPro" id="IPR001684">
    <property type="entry name" value="Ribosomal_bL27"/>
</dbReference>
<dbReference type="InterPro" id="IPR018261">
    <property type="entry name" value="Ribosomal_bL27_CS"/>
</dbReference>
<dbReference type="NCBIfam" id="TIGR00062">
    <property type="entry name" value="L27"/>
    <property type="match status" value="1"/>
</dbReference>
<dbReference type="PANTHER" id="PTHR15893:SF0">
    <property type="entry name" value="LARGE RIBOSOMAL SUBUNIT PROTEIN BL27M"/>
    <property type="match status" value="1"/>
</dbReference>
<dbReference type="PANTHER" id="PTHR15893">
    <property type="entry name" value="RIBOSOMAL PROTEIN L27"/>
    <property type="match status" value="1"/>
</dbReference>
<dbReference type="Pfam" id="PF01016">
    <property type="entry name" value="Ribosomal_L27"/>
    <property type="match status" value="1"/>
</dbReference>
<dbReference type="PRINTS" id="PR00063">
    <property type="entry name" value="RIBOSOMALL27"/>
</dbReference>
<dbReference type="SUPFAM" id="SSF110324">
    <property type="entry name" value="Ribosomal L27 protein-like"/>
    <property type="match status" value="1"/>
</dbReference>
<dbReference type="PROSITE" id="PS00831">
    <property type="entry name" value="RIBOSOMAL_L27"/>
    <property type="match status" value="1"/>
</dbReference>
<reference key="1">
    <citation type="submission" date="2006-03" db="EMBL/GenBank/DDBJ databases">
        <title>Complete sequence of Shewanella denitrificans OS217.</title>
        <authorList>
            <consortium name="US DOE Joint Genome Institute"/>
            <person name="Copeland A."/>
            <person name="Lucas S."/>
            <person name="Lapidus A."/>
            <person name="Barry K."/>
            <person name="Detter J.C."/>
            <person name="Glavina del Rio T."/>
            <person name="Hammon N."/>
            <person name="Israni S."/>
            <person name="Dalin E."/>
            <person name="Tice H."/>
            <person name="Pitluck S."/>
            <person name="Brettin T."/>
            <person name="Bruce D."/>
            <person name="Han C."/>
            <person name="Tapia R."/>
            <person name="Gilna P."/>
            <person name="Kiss H."/>
            <person name="Schmutz J."/>
            <person name="Larimer F."/>
            <person name="Land M."/>
            <person name="Hauser L."/>
            <person name="Kyrpides N."/>
            <person name="Lykidis A."/>
            <person name="Richardson P."/>
        </authorList>
    </citation>
    <scope>NUCLEOTIDE SEQUENCE [LARGE SCALE GENOMIC DNA]</scope>
    <source>
        <strain>OS217 / ATCC BAA-1090 / DSM 15013</strain>
    </source>
</reference>
<accession>Q12K22</accession>
<keyword id="KW-1185">Reference proteome</keyword>
<keyword id="KW-0687">Ribonucleoprotein</keyword>
<keyword id="KW-0689">Ribosomal protein</keyword>